<sequence length="332" mass="37071">MSTQSGIVAEQALLHSLNENLSADGIVIIIAKISPDSTSVHQTQVARSFEELVQLASQEREPLYIFYKPEGLDKYFFVSFIPDGSPVRSRMLYASTKNTLARQVGSNSLSTEQPLITDAQDLVDLKNFDSARPAGQNKPLTHDEEMQIEINKQQALLRKNTSVKLVSQDSASPLSLTFRVNSEKPINEILDSEGKNLIIFQIDPSNETIQIVQSDTCPSVDELYIDLPGPSYTIFRQGDSSFFIYSCPSGSKVKDRMIYASNKNGFINYLKNDQKIAFSKVVEIGDFVELDKSLLMATNKEDSLDHGSNPDLPNKSNLKFNKPKGPLRKRRT</sequence>
<evidence type="ECO:0000250" key="1"/>
<evidence type="ECO:0000255" key="2">
    <source>
        <dbReference type="PROSITE-ProRule" id="PRU00599"/>
    </source>
</evidence>
<evidence type="ECO:0000256" key="3">
    <source>
        <dbReference type="SAM" id="MobiDB-lite"/>
    </source>
</evidence>
<evidence type="ECO:0000269" key="4">
    <source>
    </source>
</evidence>
<evidence type="ECO:0000305" key="5"/>
<evidence type="ECO:0007744" key="6">
    <source>
    </source>
</evidence>
<keyword id="KW-0009">Actin-binding</keyword>
<keyword id="KW-0963">Cytoplasm</keyword>
<keyword id="KW-0206">Cytoskeleton</keyword>
<keyword id="KW-0597">Phosphoprotein</keyword>
<keyword id="KW-1185">Reference proteome</keyword>
<keyword id="KW-0677">Repeat</keyword>
<accession>P53250</accession>
<accession>D6VUL2</accession>
<protein>
    <recommendedName>
        <fullName>Twinfilin-1</fullName>
    </recommendedName>
    <alternativeName>
        <fullName>Twinfilin-A</fullName>
    </alternativeName>
</protein>
<dbReference type="EMBL" id="Z72865">
    <property type="protein sequence ID" value="CAA97082.1"/>
    <property type="molecule type" value="Genomic_DNA"/>
</dbReference>
<dbReference type="EMBL" id="BK006941">
    <property type="protein sequence ID" value="DAA08173.1"/>
    <property type="molecule type" value="Genomic_DNA"/>
</dbReference>
<dbReference type="PIR" id="S64375">
    <property type="entry name" value="S64375"/>
</dbReference>
<dbReference type="RefSeq" id="NP_011594.3">
    <property type="nucleotide sequence ID" value="NM_001181209.3"/>
</dbReference>
<dbReference type="SMR" id="P53250"/>
<dbReference type="BioGRID" id="33322">
    <property type="interactions" value="95"/>
</dbReference>
<dbReference type="DIP" id="DIP-2202N"/>
<dbReference type="FunCoup" id="P53250">
    <property type="interactions" value="471"/>
</dbReference>
<dbReference type="IntAct" id="P53250">
    <property type="interactions" value="17"/>
</dbReference>
<dbReference type="MINT" id="P53250"/>
<dbReference type="STRING" id="4932.YGR080W"/>
<dbReference type="iPTMnet" id="P53250"/>
<dbReference type="PaxDb" id="4932-YGR080W"/>
<dbReference type="PeptideAtlas" id="P53250"/>
<dbReference type="EnsemblFungi" id="YGR080W_mRNA">
    <property type="protein sequence ID" value="YGR080W"/>
    <property type="gene ID" value="YGR080W"/>
</dbReference>
<dbReference type="GeneID" id="852971"/>
<dbReference type="KEGG" id="sce:YGR080W"/>
<dbReference type="AGR" id="SGD:S000003312"/>
<dbReference type="SGD" id="S000003312">
    <property type="gene designation" value="TWF1"/>
</dbReference>
<dbReference type="VEuPathDB" id="FungiDB:YGR080W"/>
<dbReference type="eggNOG" id="KOG1747">
    <property type="taxonomic scope" value="Eukaryota"/>
</dbReference>
<dbReference type="GeneTree" id="ENSGT00530000063868"/>
<dbReference type="HOGENOM" id="CLU_031995_0_2_1"/>
<dbReference type="InParanoid" id="P53250"/>
<dbReference type="OMA" id="YLFKHTH"/>
<dbReference type="OrthoDB" id="10006997at2759"/>
<dbReference type="BioCyc" id="YEAST:G3O-30792-MONOMER"/>
<dbReference type="BioGRID-ORCS" id="852971">
    <property type="hits" value="1 hit in 10 CRISPR screens"/>
</dbReference>
<dbReference type="PRO" id="PR:P53250"/>
<dbReference type="Proteomes" id="UP000002311">
    <property type="component" value="Chromosome VII"/>
</dbReference>
<dbReference type="RNAct" id="P53250">
    <property type="molecule type" value="protein"/>
</dbReference>
<dbReference type="GO" id="GO:0005884">
    <property type="term" value="C:actin filament"/>
    <property type="evidence" value="ECO:0000314"/>
    <property type="project" value="SGD"/>
</dbReference>
<dbReference type="GO" id="GO:0005737">
    <property type="term" value="C:cytoplasm"/>
    <property type="evidence" value="ECO:0000318"/>
    <property type="project" value="GO_Central"/>
</dbReference>
<dbReference type="GO" id="GO:0043332">
    <property type="term" value="C:mating projection tip"/>
    <property type="evidence" value="ECO:0007005"/>
    <property type="project" value="SGD"/>
</dbReference>
<dbReference type="GO" id="GO:0051015">
    <property type="term" value="F:actin filament binding"/>
    <property type="evidence" value="ECO:0000314"/>
    <property type="project" value="SGD"/>
</dbReference>
<dbReference type="GO" id="GO:0003785">
    <property type="term" value="F:actin monomer binding"/>
    <property type="evidence" value="ECO:0000314"/>
    <property type="project" value="SGD"/>
</dbReference>
<dbReference type="GO" id="GO:0140311">
    <property type="term" value="F:protein sequestering activity"/>
    <property type="evidence" value="ECO:0000314"/>
    <property type="project" value="SGD"/>
</dbReference>
<dbReference type="GO" id="GO:0044396">
    <property type="term" value="P:actin cortical patch organization"/>
    <property type="evidence" value="ECO:0000315"/>
    <property type="project" value="SGD"/>
</dbReference>
<dbReference type="GO" id="GO:0030042">
    <property type="term" value="P:actin filament depolymerization"/>
    <property type="evidence" value="ECO:0000314"/>
    <property type="project" value="SGD"/>
</dbReference>
<dbReference type="GO" id="GO:0007015">
    <property type="term" value="P:actin filament organization"/>
    <property type="evidence" value="ECO:0000314"/>
    <property type="project" value="SGD"/>
</dbReference>
<dbReference type="GO" id="GO:0051014">
    <property type="term" value="P:actin filament severing"/>
    <property type="evidence" value="ECO:0000314"/>
    <property type="project" value="SGD"/>
</dbReference>
<dbReference type="GO" id="GO:0051016">
    <property type="term" value="P:barbed-end actin filament capping"/>
    <property type="evidence" value="ECO:0000318"/>
    <property type="project" value="GO_Central"/>
</dbReference>
<dbReference type="GO" id="GO:0030836">
    <property type="term" value="P:positive regulation of actin filament depolymerization"/>
    <property type="evidence" value="ECO:0000314"/>
    <property type="project" value="SGD"/>
</dbReference>
<dbReference type="CDD" id="cd11284">
    <property type="entry name" value="ADF_Twf-C_like"/>
    <property type="match status" value="1"/>
</dbReference>
<dbReference type="CDD" id="cd11285">
    <property type="entry name" value="ADF_Twf-N_like"/>
    <property type="match status" value="1"/>
</dbReference>
<dbReference type="Gene3D" id="3.40.20.10">
    <property type="entry name" value="Severin"/>
    <property type="match status" value="2"/>
</dbReference>
<dbReference type="InterPro" id="IPR002108">
    <property type="entry name" value="ADF-H"/>
</dbReference>
<dbReference type="InterPro" id="IPR029006">
    <property type="entry name" value="ADF-H/Gelsolin-like_dom_sf"/>
</dbReference>
<dbReference type="InterPro" id="IPR028458">
    <property type="entry name" value="Twinfilin"/>
</dbReference>
<dbReference type="PANTHER" id="PTHR13759">
    <property type="entry name" value="TWINFILIN"/>
    <property type="match status" value="1"/>
</dbReference>
<dbReference type="PANTHER" id="PTHR13759:SF1">
    <property type="entry name" value="TWINFILIN"/>
    <property type="match status" value="1"/>
</dbReference>
<dbReference type="Pfam" id="PF00241">
    <property type="entry name" value="Cofilin_ADF"/>
    <property type="match status" value="2"/>
</dbReference>
<dbReference type="SMART" id="SM00102">
    <property type="entry name" value="ADF"/>
    <property type="match status" value="2"/>
</dbReference>
<dbReference type="SUPFAM" id="SSF55753">
    <property type="entry name" value="Actin depolymerizing proteins"/>
    <property type="match status" value="2"/>
</dbReference>
<dbReference type="PROSITE" id="PS51263">
    <property type="entry name" value="ADF_H"/>
    <property type="match status" value="2"/>
</dbReference>
<reference key="1">
    <citation type="journal article" date="1997" name="Nature">
        <title>The nucleotide sequence of Saccharomyces cerevisiae chromosome VII.</title>
        <authorList>
            <person name="Tettelin H."/>
            <person name="Agostoni-Carbone M.L."/>
            <person name="Albermann K."/>
            <person name="Albers M."/>
            <person name="Arroyo J."/>
            <person name="Backes U."/>
            <person name="Barreiros T."/>
            <person name="Bertani I."/>
            <person name="Bjourson A.J."/>
            <person name="Brueckner M."/>
            <person name="Bruschi C.V."/>
            <person name="Carignani G."/>
            <person name="Castagnoli L."/>
            <person name="Cerdan E."/>
            <person name="Clemente M.L."/>
            <person name="Coblenz A."/>
            <person name="Coglievina M."/>
            <person name="Coissac E."/>
            <person name="Defoor E."/>
            <person name="Del Bino S."/>
            <person name="Delius H."/>
            <person name="Delneri D."/>
            <person name="de Wergifosse P."/>
            <person name="Dujon B."/>
            <person name="Durand P."/>
            <person name="Entian K.-D."/>
            <person name="Eraso P."/>
            <person name="Escribano V."/>
            <person name="Fabiani L."/>
            <person name="Fartmann B."/>
            <person name="Feroli F."/>
            <person name="Feuermann M."/>
            <person name="Frontali L."/>
            <person name="Garcia-Gonzalez M."/>
            <person name="Garcia-Saez M.I."/>
            <person name="Goffeau A."/>
            <person name="Guerreiro P."/>
            <person name="Hani J."/>
            <person name="Hansen M."/>
            <person name="Hebling U."/>
            <person name="Hernandez K."/>
            <person name="Heumann K."/>
            <person name="Hilger F."/>
            <person name="Hofmann B."/>
            <person name="Indge K.J."/>
            <person name="James C.M."/>
            <person name="Klima R."/>
            <person name="Koetter P."/>
            <person name="Kramer B."/>
            <person name="Kramer W."/>
            <person name="Lauquin G."/>
            <person name="Leuther H."/>
            <person name="Louis E.J."/>
            <person name="Maillier E."/>
            <person name="Marconi A."/>
            <person name="Martegani E."/>
            <person name="Mazon M.J."/>
            <person name="Mazzoni C."/>
            <person name="McReynolds A.D.K."/>
            <person name="Melchioretto P."/>
            <person name="Mewes H.-W."/>
            <person name="Minenkova O."/>
            <person name="Mueller-Auer S."/>
            <person name="Nawrocki A."/>
            <person name="Netter P."/>
            <person name="Neu R."/>
            <person name="Nombela C."/>
            <person name="Oliver S.G."/>
            <person name="Panzeri L."/>
            <person name="Paoluzi S."/>
            <person name="Plevani P."/>
            <person name="Portetelle D."/>
            <person name="Portillo F."/>
            <person name="Potier S."/>
            <person name="Purnelle B."/>
            <person name="Rieger M."/>
            <person name="Riles L."/>
            <person name="Rinaldi T."/>
            <person name="Robben J."/>
            <person name="Rodrigues-Pousada C."/>
            <person name="Rodriguez-Belmonte E."/>
            <person name="Rodriguez-Torres A.M."/>
            <person name="Rose M."/>
            <person name="Ruzzi M."/>
            <person name="Saliola M."/>
            <person name="Sanchez-Perez M."/>
            <person name="Schaefer B."/>
            <person name="Schaefer M."/>
            <person name="Scharfe M."/>
            <person name="Schmidheini T."/>
            <person name="Schreer A."/>
            <person name="Skala J."/>
            <person name="Souciet J.-L."/>
            <person name="Steensma H.Y."/>
            <person name="Talla E."/>
            <person name="Thierry A."/>
            <person name="Vandenbol M."/>
            <person name="van der Aart Q.J.M."/>
            <person name="Van Dyck L."/>
            <person name="Vanoni M."/>
            <person name="Verhasselt P."/>
            <person name="Voet M."/>
            <person name="Volckaert G."/>
            <person name="Wambutt R."/>
            <person name="Watson M.D."/>
            <person name="Weber N."/>
            <person name="Wedler E."/>
            <person name="Wedler H."/>
            <person name="Wipfli P."/>
            <person name="Wolf K."/>
            <person name="Wright L.F."/>
            <person name="Zaccaria P."/>
            <person name="Zimmermann M."/>
            <person name="Zollner A."/>
            <person name="Kleine K."/>
        </authorList>
    </citation>
    <scope>NUCLEOTIDE SEQUENCE [LARGE SCALE GENOMIC DNA]</scope>
    <source>
        <strain>ATCC 204508 / S288c</strain>
    </source>
</reference>
<reference key="2">
    <citation type="journal article" date="2014" name="G3 (Bethesda)">
        <title>The reference genome sequence of Saccharomyces cerevisiae: Then and now.</title>
        <authorList>
            <person name="Engel S.R."/>
            <person name="Dietrich F.S."/>
            <person name="Fisk D.G."/>
            <person name="Binkley G."/>
            <person name="Balakrishnan R."/>
            <person name="Costanzo M.C."/>
            <person name="Dwight S.S."/>
            <person name="Hitz B.C."/>
            <person name="Karra K."/>
            <person name="Nash R.S."/>
            <person name="Weng S."/>
            <person name="Wong E.D."/>
            <person name="Lloyd P."/>
            <person name="Skrzypek M.S."/>
            <person name="Miyasato S.R."/>
            <person name="Simison M."/>
            <person name="Cherry J.M."/>
        </authorList>
    </citation>
    <scope>GENOME REANNOTATION</scope>
    <source>
        <strain>ATCC 204508 / S288c</strain>
    </source>
</reference>
<reference key="3">
    <citation type="journal article" date="1998" name="J. Cell Biol.">
        <title>Regulation of the cortical actin cytoskeleton in budding yeast by twinfilin, a ubiquitous actin monomer-sequestering protein.</title>
        <authorList>
            <person name="Goode B.L."/>
            <person name="Drubin D.G."/>
            <person name="Lappalainen P."/>
        </authorList>
    </citation>
    <scope>CHARACTERIZATION</scope>
</reference>
<reference key="4">
    <citation type="journal article" date="2003" name="Nature">
        <title>Global analysis of protein expression in yeast.</title>
        <authorList>
            <person name="Ghaemmaghami S."/>
            <person name="Huh W.-K."/>
            <person name="Bower K."/>
            <person name="Howson R.W."/>
            <person name="Belle A."/>
            <person name="Dephoure N."/>
            <person name="O'Shea E.K."/>
            <person name="Weissman J.S."/>
        </authorList>
    </citation>
    <scope>LEVEL OF PROTEIN EXPRESSION [LARGE SCALE ANALYSIS]</scope>
</reference>
<reference key="5">
    <citation type="journal article" date="2008" name="Mol. Cell. Proteomics">
        <title>A multidimensional chromatography technology for in-depth phosphoproteome analysis.</title>
        <authorList>
            <person name="Albuquerque C.P."/>
            <person name="Smolka M.B."/>
            <person name="Payne S.H."/>
            <person name="Bafna V."/>
            <person name="Eng J."/>
            <person name="Zhou H."/>
        </authorList>
    </citation>
    <scope>PHOSPHORYLATION [LARGE SCALE ANALYSIS] AT SER-167 AND SER-172</scope>
    <scope>IDENTIFICATION BY MASS SPECTROMETRY [LARGE SCALE ANALYSIS]</scope>
</reference>
<proteinExistence type="evidence at protein level"/>
<gene>
    <name type="primary">TWF1</name>
    <name type="ordered locus">YGR080W</name>
</gene>
<name>TWF1_YEAST</name>
<feature type="chain" id="PRO_0000214953" description="Twinfilin-1">
    <location>
        <begin position="1"/>
        <end position="332"/>
    </location>
</feature>
<feature type="domain" description="ADF-H 1" evidence="2">
    <location>
        <begin position="5"/>
        <end position="132"/>
    </location>
</feature>
<feature type="domain" description="ADF-H 2" evidence="2">
    <location>
        <begin position="173"/>
        <end position="300"/>
    </location>
</feature>
<feature type="region of interest" description="Disordered" evidence="3">
    <location>
        <begin position="301"/>
        <end position="332"/>
    </location>
</feature>
<feature type="compositionally biased region" description="Basic residues" evidence="3">
    <location>
        <begin position="321"/>
        <end position="332"/>
    </location>
</feature>
<feature type="modified residue" description="Phosphoserine" evidence="6">
    <location>
        <position position="167"/>
    </location>
</feature>
<feature type="modified residue" description="Phosphoserine" evidence="6">
    <location>
        <position position="172"/>
    </location>
</feature>
<organism>
    <name type="scientific">Saccharomyces cerevisiae (strain ATCC 204508 / S288c)</name>
    <name type="common">Baker's yeast</name>
    <dbReference type="NCBI Taxonomy" id="559292"/>
    <lineage>
        <taxon>Eukaryota</taxon>
        <taxon>Fungi</taxon>
        <taxon>Dikarya</taxon>
        <taxon>Ascomycota</taxon>
        <taxon>Saccharomycotina</taxon>
        <taxon>Saccharomycetes</taxon>
        <taxon>Saccharomycetales</taxon>
        <taxon>Saccharomycetaceae</taxon>
        <taxon>Saccharomyces</taxon>
    </lineage>
</organism>
<comment type="function">
    <text evidence="1">Actin-binding protein involved in motile and morphological processes. Inhibits actin polymerization, likely by sequestering G-actin. Prevents actin filament assembly by forming a 1:1 complex with actin monomers, and inhibits the nucleotide exchange reaction of actin monomers (By similarity).</text>
</comment>
<comment type="subunit">
    <text evidence="1">Interacts with G-actin; ADP-actin form.</text>
</comment>
<comment type="interaction">
    <interactant intactId="EBI-19663">
        <id>P53250</id>
    </interactant>
    <interactant intactId="EBI-4024">
        <id>P17555</id>
        <label>SRV2</label>
    </interactant>
    <organismsDiffer>false</organismsDiffer>
    <experiments>3</experiments>
</comment>
<comment type="interaction">
    <interactant intactId="EBI-19663">
        <id>P53250</id>
    </interactant>
    <interactant intactId="EBI-367540">
        <id>P68135</id>
        <label>ACTA1</label>
    </interactant>
    <organismsDiffer>true</organismsDiffer>
    <experiments>5</experiments>
</comment>
<comment type="subcellular location">
    <subcellularLocation>
        <location evidence="1">Cytoplasm</location>
        <location evidence="1">Cytoskeleton</location>
    </subcellularLocation>
</comment>
<comment type="miscellaneous">
    <text evidence="4">Present with 1470 molecules/cell in log phase SD medium.</text>
</comment>
<comment type="similarity">
    <text evidence="5">Belongs to the actin-binding proteins ADF family. Twinfilin subfamily.</text>
</comment>
<comment type="online information" name="Protein Spotlight">
    <link uri="https://www.proteinspotlight.org/back_issues/073"/>
    <text>Molecular embrace - Issue 73 of August 2006</text>
</comment>